<proteinExistence type="evidence at protein level"/>
<comment type="function">
    <text evidence="3 6 7 8 9 12 13">Functions as a component of the nuclear pore complex (NPC). NPC components, collectively referred to as nucleoporins (NUPs), can play the role of both NPC structural components and of docking or interaction partners for transiently associated nuclear transport factors. Active directional transport is assured by both, a Phe-Gly (FG) repeat affinity gradient for these transport factors across the NPC and a transport cofactor concentration gradient across the nuclear envelope (GSP1 and GSP2 GTPases associated predominantly with GTP in the nucleus, with GDP in the cytoplasm). NUP53 may play an important role in cell cycle regulation by inhibiting PSE1 transport functions during mitosis and sequestration of MAD1-MAD2 in a cell cycle-dependent manner. It also seems to play an important role in de novo NPC assembly by associating with nuclear membranes and driving their proliferation.</text>
</comment>
<comment type="subunit">
    <text evidence="3 4 5 13">Component of the nuclear pore complex (NPC). NPC constitutes the exclusive means of nucleocytoplasmic transport. NPCs allow the passive diffusion of ions and small molecules and the active, nuclear transport receptor-mediated bidirectional transport of macromolecules such as proteins, RNAs, ribonucleoparticles (RNPs), and ribosomal subunits across the nuclear envelope. Due to its 8-fold rotational symmetry, all subunits are present with 8 copies or multiples thereof. NUP53 interacts with MAD1-MAD2. During mitosis NUP53 changes its binding partner within the NPC from NUP170 to NIC96, exposing a high affinity binding site for the karyopherin PSE1, and retaining it in the NPC, while MAD2 is released. It forms a subcomplex with ASM4 and NDC1.</text>
</comment>
<comment type="interaction">
    <interactant intactId="EBI-27321">
        <id>Q03790</id>
    </interactant>
    <interactant intactId="EBI-11950">
        <id>P32500</id>
        <label>NDC1</label>
    </interactant>
    <organismsDiffer>false</organismsDiffer>
    <experiments>3</experiments>
</comment>
<comment type="interaction">
    <interactant intactId="EBI-27321">
        <id>Q03790</id>
    </interactant>
    <interactant intactId="EBI-12056">
        <id>P34077</id>
        <label>NIC96</label>
    </interactant>
    <organismsDiffer>false</organismsDiffer>
    <experiments>3</experiments>
</comment>
<comment type="interaction">
    <interactant intactId="EBI-27321">
        <id>Q03790</id>
    </interactant>
    <interactant intactId="EBI-11740">
        <id>P40064</id>
        <label>NUP157</label>
    </interactant>
    <organismsDiffer>false</organismsDiffer>
    <experiments>3</experiments>
</comment>
<comment type="interaction">
    <interactant intactId="EBI-27321">
        <id>Q03790</id>
    </interactant>
    <interactant intactId="EBI-11756">
        <id>P38181</id>
        <label>NUP170</label>
    </interactant>
    <organismsDiffer>false</organismsDiffer>
    <experiments>6</experiments>
</comment>
<comment type="interaction">
    <interactant intactId="EBI-27321">
        <id>Q03790</id>
    </interactant>
    <interactant intactId="EBI-27321">
        <id>Q03790</id>
        <label>NUP53</label>
    </interactant>
    <organismsDiffer>false</organismsDiffer>
    <experiments>3</experiments>
</comment>
<comment type="subcellular location">
    <subcellularLocation>
        <location evidence="3">Nucleus</location>
        <location evidence="3">Nuclear pore complex</location>
    </subcellularLocation>
    <subcellularLocation>
        <location>Nucleus membrane</location>
        <topology>Peripheral membrane protein</topology>
        <orientation>Cytoplasmic side</orientation>
    </subcellularLocation>
    <subcellularLocation>
        <location>Nucleus membrane</location>
        <topology>Peripheral membrane protein</topology>
        <orientation>Nucleoplasmic side</orientation>
    </subcellularLocation>
    <text>Symmetric distribution.</text>
</comment>
<comment type="domain">
    <text evidence="7">Contains FG repeats. FG repeats are interaction sites for karyopherins (importins, exportins) and form probably an affinity gradient, guiding the transport proteins unidirectionally with their cargo through the NPC. FG repeat regions are highly flexible and lack ordered secondary structure. The overall conservation of FG repeats regarding exact sequence, spacing, and repeat unit length is limited. FG repeat types and their physico-chemical environment change across the NPC from the nucleoplasmic to the cytoplasmic side.</text>
</comment>
<comment type="domain">
    <text evidence="7">The RRM Nup35-type domain might be involved in the control of mitosis.</text>
</comment>
<comment type="PTM">
    <text evidence="11 13">Phosphorylated by CDC28.</text>
</comment>
<comment type="miscellaneous">
    <text evidence="10">Present with 2060 molecules/cell in log phase SD medium.</text>
</comment>
<dbReference type="EMBL" id="Z49705">
    <property type="protein sequence ID" value="CAA89789.1"/>
    <property type="molecule type" value="Genomic_DNA"/>
</dbReference>
<dbReference type="EMBL" id="BK006946">
    <property type="protein sequence ID" value="DAA10048.1"/>
    <property type="molecule type" value="Genomic_DNA"/>
</dbReference>
<dbReference type="PIR" id="S54511">
    <property type="entry name" value="S54511"/>
</dbReference>
<dbReference type="RefSeq" id="NP_013873.1">
    <property type="nucleotide sequence ID" value="NM_001182656.1"/>
</dbReference>
<dbReference type="PDB" id="3W3Y">
    <property type="method" value="X-ray"/>
    <property type="resolution" value="2.80 A"/>
    <property type="chains" value="B=401-448"/>
</dbReference>
<dbReference type="PDB" id="5UAZ">
    <property type="method" value="X-ray"/>
    <property type="resolution" value="1.75 A"/>
    <property type="chains" value="A/B=247-355"/>
</dbReference>
<dbReference type="PDB" id="7N85">
    <property type="method" value="EM"/>
    <property type="resolution" value="7.60 A"/>
    <property type="chains" value="U/W=1-475"/>
</dbReference>
<dbReference type="PDB" id="7N9F">
    <property type="method" value="EM"/>
    <property type="resolution" value="37.00 A"/>
    <property type="chains" value="U/W=1-475"/>
</dbReference>
<dbReference type="PDB" id="8TJ5">
    <property type="method" value="EM"/>
    <property type="resolution" value="6.60 A"/>
    <property type="chains" value="U/W=1-475"/>
</dbReference>
<dbReference type="PDBsum" id="3W3Y"/>
<dbReference type="PDBsum" id="5UAZ"/>
<dbReference type="PDBsum" id="7N85"/>
<dbReference type="PDBsum" id="7N9F"/>
<dbReference type="PDBsum" id="8TJ5"/>
<dbReference type="EMDB" id="EMD-24232"/>
<dbReference type="EMDB" id="EMD-24258"/>
<dbReference type="EMDB" id="EMD-41300"/>
<dbReference type="SMR" id="Q03790"/>
<dbReference type="BioGRID" id="35328">
    <property type="interactions" value="214"/>
</dbReference>
<dbReference type="ComplexPortal" id="CPX-824">
    <property type="entry name" value="Nuclear pore complex"/>
</dbReference>
<dbReference type="DIP" id="DIP-1467N"/>
<dbReference type="FunCoup" id="Q03790">
    <property type="interactions" value="227"/>
</dbReference>
<dbReference type="IntAct" id="Q03790">
    <property type="interactions" value="29"/>
</dbReference>
<dbReference type="MINT" id="Q03790"/>
<dbReference type="STRING" id="4932.YMR153W"/>
<dbReference type="MoonDB" id="Q03790">
    <property type="type" value="Predicted"/>
</dbReference>
<dbReference type="TCDB" id="1.I.1.1.1">
    <property type="family name" value="the nuclear pore complex (npc) family"/>
</dbReference>
<dbReference type="GlyGen" id="Q03790">
    <property type="glycosylation" value="2 sites, 1 O-linked glycan (1 site)"/>
</dbReference>
<dbReference type="iPTMnet" id="Q03790"/>
<dbReference type="PaxDb" id="4932-YMR153W"/>
<dbReference type="PeptideAtlas" id="Q03790"/>
<dbReference type="DNASU" id="855184"/>
<dbReference type="EnsemblFungi" id="YMR153W_mRNA">
    <property type="protein sequence ID" value="YMR153W"/>
    <property type="gene ID" value="YMR153W"/>
</dbReference>
<dbReference type="GeneID" id="855184"/>
<dbReference type="KEGG" id="sce:YMR153W"/>
<dbReference type="AGR" id="SGD:S000004762"/>
<dbReference type="SGD" id="S000004762">
    <property type="gene designation" value="NUP53"/>
</dbReference>
<dbReference type="VEuPathDB" id="FungiDB:YMR153W"/>
<dbReference type="eggNOG" id="ENOG502QWFW">
    <property type="taxonomic scope" value="Eukaryota"/>
</dbReference>
<dbReference type="GeneTree" id="ENSGT00390000005923"/>
<dbReference type="HOGENOM" id="CLU_024892_0_0_1"/>
<dbReference type="InParanoid" id="Q03790"/>
<dbReference type="OMA" id="TIHEHTP"/>
<dbReference type="OrthoDB" id="1733656at2759"/>
<dbReference type="BioCyc" id="YEAST:G3O-32843-MONOMER"/>
<dbReference type="BioGRID-ORCS" id="855184">
    <property type="hits" value="0 hits in 10 CRISPR screens"/>
</dbReference>
<dbReference type="EvolutionaryTrace" id="Q03790"/>
<dbReference type="PRO" id="PR:Q03790"/>
<dbReference type="Proteomes" id="UP000002311">
    <property type="component" value="Chromosome XIII"/>
</dbReference>
<dbReference type="RNAct" id="Q03790">
    <property type="molecule type" value="protein"/>
</dbReference>
<dbReference type="GO" id="GO:0005635">
    <property type="term" value="C:nuclear envelope"/>
    <property type="evidence" value="ECO:0000303"/>
    <property type="project" value="ComplexPortal"/>
</dbReference>
<dbReference type="GO" id="GO:0031965">
    <property type="term" value="C:nuclear membrane"/>
    <property type="evidence" value="ECO:0007669"/>
    <property type="project" value="UniProtKB-SubCell"/>
</dbReference>
<dbReference type="GO" id="GO:0005643">
    <property type="term" value="C:nuclear pore"/>
    <property type="evidence" value="ECO:0000314"/>
    <property type="project" value="SGD"/>
</dbReference>
<dbReference type="GO" id="GO:0044613">
    <property type="term" value="C:nuclear pore central transport channel"/>
    <property type="evidence" value="ECO:0000314"/>
    <property type="project" value="SGD"/>
</dbReference>
<dbReference type="GO" id="GO:0044615">
    <property type="term" value="C:nuclear pore nuclear basket"/>
    <property type="evidence" value="ECO:0000314"/>
    <property type="project" value="SGD"/>
</dbReference>
<dbReference type="GO" id="GO:0042802">
    <property type="term" value="F:identical protein binding"/>
    <property type="evidence" value="ECO:0000353"/>
    <property type="project" value="IntAct"/>
</dbReference>
<dbReference type="GO" id="GO:0005543">
    <property type="term" value="F:phospholipid binding"/>
    <property type="evidence" value="ECO:0000314"/>
    <property type="project" value="SGD"/>
</dbReference>
<dbReference type="GO" id="GO:0003697">
    <property type="term" value="F:single-stranded DNA binding"/>
    <property type="evidence" value="ECO:0000314"/>
    <property type="project" value="SGD"/>
</dbReference>
<dbReference type="GO" id="GO:0017056">
    <property type="term" value="F:structural constituent of nuclear pore"/>
    <property type="evidence" value="ECO:0000353"/>
    <property type="project" value="SGD"/>
</dbReference>
<dbReference type="GO" id="GO:0051301">
    <property type="term" value="P:cell division"/>
    <property type="evidence" value="ECO:0007669"/>
    <property type="project" value="UniProtKB-KW"/>
</dbReference>
<dbReference type="GO" id="GO:0051028">
    <property type="term" value="P:mRNA transport"/>
    <property type="evidence" value="ECO:0007669"/>
    <property type="project" value="UniProtKB-KW"/>
</dbReference>
<dbReference type="GO" id="GO:0006607">
    <property type="term" value="P:NLS-bearing protein import into nucleus"/>
    <property type="evidence" value="ECO:0000315"/>
    <property type="project" value="SGD"/>
</dbReference>
<dbReference type="GO" id="GO:0006999">
    <property type="term" value="P:nuclear pore organization"/>
    <property type="evidence" value="ECO:0000316"/>
    <property type="project" value="SGD"/>
</dbReference>
<dbReference type="GO" id="GO:0006913">
    <property type="term" value="P:nucleocytoplasmic transport"/>
    <property type="evidence" value="ECO:0000303"/>
    <property type="project" value="ComplexPortal"/>
</dbReference>
<dbReference type="GO" id="GO:0045893">
    <property type="term" value="P:positive regulation of DNA-templated transcription"/>
    <property type="evidence" value="ECO:0000314"/>
    <property type="project" value="SGD"/>
</dbReference>
<dbReference type="GO" id="GO:0006606">
    <property type="term" value="P:protein import into nucleus"/>
    <property type="evidence" value="ECO:0000316"/>
    <property type="project" value="SGD"/>
</dbReference>
<dbReference type="GO" id="GO:0034501">
    <property type="term" value="P:protein localization to kinetochore"/>
    <property type="evidence" value="ECO:0000315"/>
    <property type="project" value="SGD"/>
</dbReference>
<dbReference type="GO" id="GO:0007088">
    <property type="term" value="P:regulation of mitotic nuclear division"/>
    <property type="evidence" value="ECO:0000315"/>
    <property type="project" value="SGD"/>
</dbReference>
<dbReference type="GO" id="GO:0060188">
    <property type="term" value="P:regulation of protein desumoylation"/>
    <property type="evidence" value="ECO:0000315"/>
    <property type="project" value="SGD"/>
</dbReference>
<dbReference type="GO" id="GO:0072417">
    <property type="term" value="P:response to spindle checkpoint signaling"/>
    <property type="evidence" value="ECO:0000315"/>
    <property type="project" value="SGD"/>
</dbReference>
<dbReference type="CDD" id="cd12721">
    <property type="entry name" value="RRM_Nup53p_fungi"/>
    <property type="match status" value="1"/>
</dbReference>
<dbReference type="FunFam" id="3.30.70.330:FF:000613">
    <property type="entry name" value="Nuclear pore complex subunit"/>
    <property type="match status" value="1"/>
</dbReference>
<dbReference type="Gene3D" id="3.30.70.330">
    <property type="match status" value="1"/>
</dbReference>
<dbReference type="InterPro" id="IPR012677">
    <property type="entry name" value="Nucleotide-bd_a/b_plait_sf"/>
</dbReference>
<dbReference type="InterPro" id="IPR035979">
    <property type="entry name" value="RBD_domain_sf"/>
</dbReference>
<dbReference type="InterPro" id="IPR007846">
    <property type="entry name" value="RRM_NUP35_dom"/>
</dbReference>
<dbReference type="PANTHER" id="PTHR21527">
    <property type="entry name" value="NUCLEOPORIN NUP35"/>
    <property type="match status" value="1"/>
</dbReference>
<dbReference type="PANTHER" id="PTHR21527:SF6">
    <property type="entry name" value="NUCLEOPORIN NUP35"/>
    <property type="match status" value="1"/>
</dbReference>
<dbReference type="Pfam" id="PF05172">
    <property type="entry name" value="RRM_Nup35"/>
    <property type="match status" value="1"/>
</dbReference>
<dbReference type="SUPFAM" id="SSF54928">
    <property type="entry name" value="RNA-binding domain, RBD"/>
    <property type="match status" value="1"/>
</dbReference>
<dbReference type="PROSITE" id="PS51472">
    <property type="entry name" value="RRM_NUP35"/>
    <property type="match status" value="1"/>
</dbReference>
<protein>
    <recommendedName>
        <fullName>Nucleoporin NUP53</fullName>
    </recommendedName>
    <alternativeName>
        <fullName>Nuclear pore protein NUP53</fullName>
    </alternativeName>
</protein>
<gene>
    <name type="primary">NUP53</name>
    <name type="ordered locus">YMR153W</name>
    <name type="ORF">YM8520.02</name>
</gene>
<organism>
    <name type="scientific">Saccharomyces cerevisiae (strain ATCC 204508 / S288c)</name>
    <name type="common">Baker's yeast</name>
    <dbReference type="NCBI Taxonomy" id="559292"/>
    <lineage>
        <taxon>Eukaryota</taxon>
        <taxon>Fungi</taxon>
        <taxon>Dikarya</taxon>
        <taxon>Ascomycota</taxon>
        <taxon>Saccharomycotina</taxon>
        <taxon>Saccharomycetes</taxon>
        <taxon>Saccharomycetales</taxon>
        <taxon>Saccharomycetaceae</taxon>
        <taxon>Saccharomyces</taxon>
    </lineage>
</organism>
<evidence type="ECO:0000255" key="1">
    <source>
        <dbReference type="PROSITE-ProRule" id="PRU00804"/>
    </source>
</evidence>
<evidence type="ECO:0000256" key="2">
    <source>
        <dbReference type="SAM" id="MobiDB-lite"/>
    </source>
</evidence>
<evidence type="ECO:0000269" key="3">
    <source>
    </source>
</evidence>
<evidence type="ECO:0000269" key="4">
    <source>
    </source>
</evidence>
<evidence type="ECO:0000269" key="5">
    <source>
    </source>
</evidence>
<evidence type="ECO:0000269" key="6">
    <source>
    </source>
</evidence>
<evidence type="ECO:0000269" key="7">
    <source>
    </source>
</evidence>
<evidence type="ECO:0000269" key="8">
    <source>
    </source>
</evidence>
<evidence type="ECO:0000269" key="9">
    <source>
    </source>
</evidence>
<evidence type="ECO:0000269" key="10">
    <source>
    </source>
</evidence>
<evidence type="ECO:0000269" key="11">
    <source>
    </source>
</evidence>
<evidence type="ECO:0000269" key="12">
    <source>
    </source>
</evidence>
<evidence type="ECO:0000269" key="13">
    <source>
    </source>
</evidence>
<evidence type="ECO:0007744" key="14">
    <source>
    </source>
</evidence>
<evidence type="ECO:0007744" key="15">
    <source>
    </source>
</evidence>
<evidence type="ECO:0007744" key="16">
    <source>
    </source>
</evidence>
<evidence type="ECO:0007829" key="17">
    <source>
        <dbReference type="PDB" id="5UAZ"/>
    </source>
</evidence>
<keyword id="KW-0002">3D-structure</keyword>
<keyword id="KW-0007">Acetylation</keyword>
<keyword id="KW-0131">Cell cycle</keyword>
<keyword id="KW-0132">Cell division</keyword>
<keyword id="KW-0472">Membrane</keyword>
<keyword id="KW-0498">Mitosis</keyword>
<keyword id="KW-0509">mRNA transport</keyword>
<keyword id="KW-0906">Nuclear pore complex</keyword>
<keyword id="KW-0539">Nucleus</keyword>
<keyword id="KW-0597">Phosphoprotein</keyword>
<keyword id="KW-0653">Protein transport</keyword>
<keyword id="KW-1185">Reference proteome</keyword>
<keyword id="KW-0677">Repeat</keyword>
<keyword id="KW-0811">Translocation</keyword>
<keyword id="KW-0813">Transport</keyword>
<sequence length="475" mass="52619">MADLQKQENSSRFTNVSVIAPESQGQHEQQKQQEQLEQQKQPTGLLKGLNGFPSAPQPLFMEDPPSTVSGELNDNPAWFNNPRKRAIPNSIIKRSNGQSLSPVRSDSADVPAFSNSNGFNNVTFGSKKDPRILKNVSPNDNNSANNNAHSSDLGTVVFDSNEAPPKTSLADWQKEDGIFSSKTDNIEDPNLSSNITFDGKPTATPSPFRPLEKTSRILNFFDKNTKTTPNTASSEASAGSKEGASTNWDDHAIIIFGYPETIANSIILHFANFGEILEDFRVIKDFKKLNSKNMSKSPSLTAQKYPIYTGDGWVKLTYKSELSKSRALQENGIIMNGTLIGCVSYSPAALKQLASLKKSEEIINNKTSSQTSLSSKDLSNYRKTEGIFEKAKAKAVTSKVRNAEFKVSKNSTSFKNPRRLEIKDGRSLFLRNRGKIHSGVLSSIESDLKKREQASKSKKSWLNRLNNWLFGWNDL</sequence>
<accession>Q03790</accession>
<accession>D6VZX4</accession>
<reference key="1">
    <citation type="journal article" date="1997" name="Nature">
        <title>The nucleotide sequence of Saccharomyces cerevisiae chromosome XIII.</title>
        <authorList>
            <person name="Bowman S."/>
            <person name="Churcher C.M."/>
            <person name="Badcock K."/>
            <person name="Brown D."/>
            <person name="Chillingworth T."/>
            <person name="Connor R."/>
            <person name="Dedman K."/>
            <person name="Devlin K."/>
            <person name="Gentles S."/>
            <person name="Hamlin N."/>
            <person name="Hunt S."/>
            <person name="Jagels K."/>
            <person name="Lye G."/>
            <person name="Moule S."/>
            <person name="Odell C."/>
            <person name="Pearson D."/>
            <person name="Rajandream M.A."/>
            <person name="Rice P."/>
            <person name="Skelton J."/>
            <person name="Walsh S.V."/>
            <person name="Whitehead S."/>
            <person name="Barrell B.G."/>
        </authorList>
    </citation>
    <scope>NUCLEOTIDE SEQUENCE [LARGE SCALE GENOMIC DNA]</scope>
    <source>
        <strain>ATCC 204508 / S288c</strain>
    </source>
</reference>
<reference key="2">
    <citation type="journal article" date="2014" name="G3 (Bethesda)">
        <title>The reference genome sequence of Saccharomyces cerevisiae: Then and now.</title>
        <authorList>
            <person name="Engel S.R."/>
            <person name="Dietrich F.S."/>
            <person name="Fisk D.G."/>
            <person name="Binkley G."/>
            <person name="Balakrishnan R."/>
            <person name="Costanzo M.C."/>
            <person name="Dwight S.S."/>
            <person name="Hitz B.C."/>
            <person name="Karra K."/>
            <person name="Nash R.S."/>
            <person name="Weng S."/>
            <person name="Wong E.D."/>
            <person name="Lloyd P."/>
            <person name="Skrzypek M.S."/>
            <person name="Miyasato S.R."/>
            <person name="Simison M."/>
            <person name="Cherry J.M."/>
        </authorList>
    </citation>
    <scope>GENOME REANNOTATION</scope>
    <source>
        <strain>ATCC 204508 / S288c</strain>
    </source>
</reference>
<reference key="3">
    <citation type="journal article" date="1998" name="J. Cell Biol.">
        <title>Specific binding of the karyopherin Kap121p to a subunit of the nuclear pore complex containing Nup53p, Nup59p, and Nup170p.</title>
        <authorList>
            <person name="Marelli M."/>
            <person name="Aitchison J.D."/>
            <person name="Wozniak R.W."/>
        </authorList>
    </citation>
    <scope>FUNCTION</scope>
    <scope>SUBCOMPLEX WITH NUP170 AND ASM4</scope>
    <scope>INTERACTION WITH KARYOPHERIN PSE1</scope>
    <scope>PHOSPHORYLATION</scope>
</reference>
<reference key="4">
    <citation type="journal article" date="2000" name="J. Cell Biol.">
        <title>The yeast nuclear pore complex: composition, architecture, and transport mechanism.</title>
        <authorList>
            <person name="Rout M.P."/>
            <person name="Aitchison J.D."/>
            <person name="Suprapto A."/>
            <person name="Hjertaas K."/>
            <person name="Zhao Y."/>
            <person name="Chait B.T."/>
        </authorList>
    </citation>
    <scope>FUNCTION</scope>
    <scope>IDENTIFICATION IN THE NUCLEAR PORE COMPLEX</scope>
    <scope>SUBCELLULAR LOCATION</scope>
</reference>
<reference key="5">
    <citation type="journal article" date="2001" name="J. Cell Biol.">
        <title>A link between the synthesis of nucleoporins and the biogenesis of the nuclear envelope.</title>
        <authorList>
            <person name="Marelli M."/>
            <person name="Lusk C.P."/>
            <person name="Chan H."/>
            <person name="Aitchison J.D."/>
            <person name="Wozniak R.W."/>
        </authorList>
    </citation>
    <scope>FUNCTION</scope>
    <scope>DE NOVO NPC ASSEMBLY</scope>
</reference>
<reference key="6">
    <citation type="journal article" date="2002" name="J. Cell Biol.">
        <title>Karyopherins in nuclear pore biogenesis: a role for Kap121p in the assembly of Nup53p into nuclear pore complexes.</title>
        <authorList>
            <person name="Lusk C.P."/>
            <person name="Makhnevych T."/>
            <person name="Marelli M."/>
            <person name="Aitchison J.D."/>
            <person name="Wozniak R.W."/>
        </authorList>
    </citation>
    <scope>FUNCTION</scope>
    <scope>DOMAIN PSE1 BINDING</scope>
</reference>
<reference key="7">
    <citation type="journal article" date="2002" name="J. Cell Biol.">
        <title>The yeast nuclear pore complex functionally interacts with components of the spindle assembly checkpoint.</title>
        <authorList>
            <person name="Iouk T."/>
            <person name="Kerscher O."/>
            <person name="Scott R.J."/>
            <person name="Basrai M.A."/>
            <person name="Wozniak R.W."/>
        </authorList>
    </citation>
    <scope>FUNCTION</scope>
    <scope>CELL CYCLE-DEPENDENT INTERACTION WITH MAD1-MAD2 COMPLEX</scope>
</reference>
<reference key="8">
    <citation type="journal article" date="2003" name="Cell">
        <title>Cell cycle regulated transport controlled by alterations in the nuclear pore complex.</title>
        <authorList>
            <person name="Makhnevych T."/>
            <person name="Lusk C.P."/>
            <person name="Anderson A.M."/>
            <person name="Aitchison J.D."/>
            <person name="Wozniak R.W."/>
        </authorList>
    </citation>
    <scope>FUNCTION</scope>
    <scope>MITOTIC PSE1 TRANSPORT INHIBITION</scope>
    <scope>NPC ASSEMBLY</scope>
</reference>
<reference key="9">
    <citation type="journal article" date="2003" name="Nature">
        <title>Global analysis of protein expression in yeast.</title>
        <authorList>
            <person name="Ghaemmaghami S."/>
            <person name="Huh W.-K."/>
            <person name="Bower K."/>
            <person name="Howson R.W."/>
            <person name="Belle A."/>
            <person name="Dephoure N."/>
            <person name="O'Shea E.K."/>
            <person name="Weissman J.S."/>
        </authorList>
    </citation>
    <scope>LEVEL OF PROTEIN EXPRESSION [LARGE SCALE ANALYSIS]</scope>
</reference>
<reference key="10">
    <citation type="journal article" date="2003" name="Proc. Natl. Acad. Sci. U.S.A.">
        <title>Disorder in the nuclear pore complex: the FG repeat regions of nucleoporins are natively unfolded.</title>
        <authorList>
            <person name="Denning D.P."/>
            <person name="Patel S.S."/>
            <person name="Uversky V."/>
            <person name="Fink A.L."/>
            <person name="Rexach M."/>
        </authorList>
    </citation>
    <scope>FUNCTION</scope>
    <scope>FG REPEAT STRUCTURE</scope>
</reference>
<reference key="11">
    <citation type="journal article" date="2000" name="Nature">
        <title>A comprehensive analysis of protein-protein interactions in Saccharomyces cerevisiae.</title>
        <authorList>
            <person name="Uetz P."/>
            <person name="Giot L."/>
            <person name="Cagney G."/>
            <person name="Mansfield T.A."/>
            <person name="Judson R.S."/>
            <person name="Knight J.R."/>
            <person name="Lockshon D."/>
            <person name="Narayan V."/>
            <person name="Srinivasan M."/>
            <person name="Pochart P."/>
            <person name="Qureshi-Emili A."/>
            <person name="Li Y."/>
            <person name="Godwin B."/>
            <person name="Conover D."/>
            <person name="Kalbfleisch T."/>
            <person name="Vijayadamodar G."/>
            <person name="Yang M."/>
            <person name="Johnston M."/>
            <person name="Fields S."/>
            <person name="Rothberg J.M."/>
        </authorList>
    </citation>
    <scope>INTERACTION</scope>
</reference>
<reference key="12">
    <citation type="journal article" date="2001" name="Proc. Natl. Acad. Sci. U.S.A.">
        <title>A comprehensive two-hybrid analysis to explore the yeast protein interactome.</title>
        <authorList>
            <person name="Ito T."/>
            <person name="Chiba T."/>
            <person name="Ozawa R."/>
            <person name="Yoshida M."/>
            <person name="Hattori M."/>
            <person name="Sakaki Y."/>
        </authorList>
    </citation>
    <scope>INTERACTION</scope>
</reference>
<reference key="13">
    <citation type="journal article" date="2003" name="Dev. Cell">
        <title>Peering through the pore: nuclear pore complex structure, assembly, and function.</title>
        <authorList>
            <person name="Suntharalingam M."/>
            <person name="Wente S.R."/>
        </authorList>
    </citation>
    <scope>REVIEW</scope>
</reference>
<reference key="14">
    <citation type="journal article" date="2003" name="Nature">
        <title>Targets of the cyclin-dependent kinase Cdk1.</title>
        <authorList>
            <person name="Ubersax J.A."/>
            <person name="Woodbury E.L."/>
            <person name="Quang P.N."/>
            <person name="Paraz M."/>
            <person name="Blethrow J.D."/>
            <person name="Shah K."/>
            <person name="Shokat K.M."/>
            <person name="Morgan D.O."/>
        </authorList>
    </citation>
    <scope>PHOSPHORYLATION BY CDC28</scope>
</reference>
<reference key="15">
    <citation type="journal article" date="2007" name="J. Proteome Res.">
        <title>Large-scale phosphorylation analysis of alpha-factor-arrested Saccharomyces cerevisiae.</title>
        <authorList>
            <person name="Li X."/>
            <person name="Gerber S.A."/>
            <person name="Rudner A.D."/>
            <person name="Beausoleil S.A."/>
            <person name="Haas W."/>
            <person name="Villen J."/>
            <person name="Elias J.E."/>
            <person name="Gygi S.P."/>
        </authorList>
    </citation>
    <scope>IDENTIFICATION BY MASS SPECTROMETRY [LARGE SCALE ANALYSIS]</scope>
    <source>
        <strain>ADR376</strain>
    </source>
</reference>
<reference key="16">
    <citation type="journal article" date="2008" name="Mol. Cell. Proteomics">
        <title>A multidimensional chromatography technology for in-depth phosphoproteome analysis.</title>
        <authorList>
            <person name="Albuquerque C.P."/>
            <person name="Smolka M.B."/>
            <person name="Payne S.H."/>
            <person name="Bafna V."/>
            <person name="Eng J."/>
            <person name="Zhou H."/>
        </authorList>
    </citation>
    <scope>PHOSPHORYLATION [LARGE SCALE ANALYSIS] AT SER-101 AND SER-438</scope>
    <scope>IDENTIFICATION BY MASS SPECTROMETRY [LARGE SCALE ANALYSIS]</scope>
</reference>
<reference key="17">
    <citation type="journal article" date="2009" name="Science">
        <title>Global analysis of Cdk1 substrate phosphorylation sites provides insights into evolution.</title>
        <authorList>
            <person name="Holt L.J."/>
            <person name="Tuch B.B."/>
            <person name="Villen J."/>
            <person name="Johnson A.D."/>
            <person name="Gygi S.P."/>
            <person name="Morgan D.O."/>
        </authorList>
    </citation>
    <scope>PHOSPHORYLATION [LARGE SCALE ANALYSIS] AT SER-297</scope>
    <scope>IDENTIFICATION BY MASS SPECTROMETRY [LARGE SCALE ANALYSIS]</scope>
</reference>
<reference key="18">
    <citation type="journal article" date="2012" name="Proc. Natl. Acad. Sci. U.S.A.">
        <title>N-terminal acetylome analyses and functional insights of the N-terminal acetyltransferase NatB.</title>
        <authorList>
            <person name="Van Damme P."/>
            <person name="Lasa M."/>
            <person name="Polevoda B."/>
            <person name="Gazquez C."/>
            <person name="Elosegui-Artola A."/>
            <person name="Kim D.S."/>
            <person name="De Juan-Pardo E."/>
            <person name="Demeyer K."/>
            <person name="Hole K."/>
            <person name="Larrea E."/>
            <person name="Timmerman E."/>
            <person name="Prieto J."/>
            <person name="Arnesen T."/>
            <person name="Sherman F."/>
            <person name="Gevaert K."/>
            <person name="Aldabe R."/>
        </authorList>
    </citation>
    <scope>ACETYLATION [LARGE SCALE ANALYSIS] AT ALA-2</scope>
    <scope>CLEAVAGE OF INITIATOR METHIONINE [LARGE SCALE ANALYSIS]</scope>
    <scope>IDENTIFICATION BY MASS SPECTROMETRY [LARGE SCALE ANALYSIS]</scope>
</reference>
<feature type="initiator methionine" description="Removed" evidence="16">
    <location>
        <position position="1"/>
    </location>
</feature>
<feature type="chain" id="PRO_0000204871" description="Nucleoporin NUP53">
    <location>
        <begin position="2"/>
        <end position="475"/>
    </location>
</feature>
<feature type="repeat" description="FG 1" evidence="9">
    <location>
        <begin position="124"/>
        <end position="125"/>
    </location>
</feature>
<feature type="domain" description="RRM Nup35-type" evidence="1">
    <location>
        <begin position="247"/>
        <end position="352"/>
    </location>
</feature>
<feature type="repeat" description="FG 2" evidence="9">
    <location>
        <begin position="264"/>
        <end position="265"/>
    </location>
</feature>
<feature type="repeat" description="FG 3" evidence="9">
    <location>
        <begin position="273"/>
        <end position="274"/>
    </location>
</feature>
<feature type="repeat" description="FG 4" evidence="9">
    <location>
        <begin position="470"/>
        <end position="471"/>
    </location>
</feature>
<feature type="region of interest" description="Disordered" evidence="2">
    <location>
        <begin position="1"/>
        <end position="83"/>
    </location>
</feature>
<feature type="region of interest" description="Disordered" evidence="2">
    <location>
        <begin position="89"/>
        <end position="108"/>
    </location>
</feature>
<feature type="region of interest" description="Disordered" evidence="2">
    <location>
        <begin position="190"/>
        <end position="209"/>
    </location>
</feature>
<feature type="region of interest" description="Disordered" evidence="2">
    <location>
        <begin position="222"/>
        <end position="244"/>
    </location>
</feature>
<feature type="region of interest" description="PSE1 binding">
    <location>
        <begin position="405"/>
        <end position="438"/>
    </location>
</feature>
<feature type="region of interest" description="Required for nuclear membrane association and proliferation">
    <location>
        <begin position="449"/>
        <end position="475"/>
    </location>
</feature>
<feature type="compositionally biased region" description="Polar residues" evidence="2">
    <location>
        <begin position="7"/>
        <end position="17"/>
    </location>
</feature>
<feature type="compositionally biased region" description="Low complexity" evidence="2">
    <location>
        <begin position="22"/>
        <end position="41"/>
    </location>
</feature>
<feature type="compositionally biased region" description="Polar residues" evidence="2">
    <location>
        <begin position="92"/>
        <end position="104"/>
    </location>
</feature>
<feature type="compositionally biased region" description="Low complexity" evidence="2">
    <location>
        <begin position="232"/>
        <end position="244"/>
    </location>
</feature>
<feature type="modified residue" description="N-acetylalanine" evidence="16">
    <location>
        <position position="2"/>
    </location>
</feature>
<feature type="modified residue" description="Phosphoserine" evidence="14">
    <location>
        <position position="101"/>
    </location>
</feature>
<feature type="modified residue" description="Phosphoserine" evidence="15">
    <location>
        <position position="297"/>
    </location>
</feature>
<feature type="modified residue" description="Phosphoserine" evidence="14">
    <location>
        <position position="438"/>
    </location>
</feature>
<feature type="helix" evidence="17">
    <location>
        <begin position="249"/>
        <end position="251"/>
    </location>
</feature>
<feature type="strand" evidence="17">
    <location>
        <begin position="252"/>
        <end position="256"/>
    </location>
</feature>
<feature type="helix" evidence="17">
    <location>
        <begin position="260"/>
        <end position="262"/>
    </location>
</feature>
<feature type="helix" evidence="17">
    <location>
        <begin position="263"/>
        <end position="271"/>
    </location>
</feature>
<feature type="helix" evidence="17">
    <location>
        <begin position="281"/>
        <end position="283"/>
    </location>
</feature>
<feature type="strand" evidence="17">
    <location>
        <begin position="313"/>
        <end position="319"/>
    </location>
</feature>
<feature type="helix" evidence="17">
    <location>
        <begin position="321"/>
        <end position="328"/>
    </location>
</feature>
<feature type="turn" evidence="17">
    <location>
        <begin position="329"/>
        <end position="332"/>
    </location>
</feature>
<feature type="strand" evidence="17">
    <location>
        <begin position="333"/>
        <end position="335"/>
    </location>
</feature>
<feature type="strand" evidence="17">
    <location>
        <begin position="338"/>
        <end position="344"/>
    </location>
</feature>
<feature type="helix" evidence="17">
    <location>
        <begin position="347"/>
        <end position="352"/>
    </location>
</feature>
<name>NUP53_YEAST</name>